<feature type="initiator methionine" description="Removed" evidence="1">
    <location>
        <position position="1"/>
    </location>
</feature>
<feature type="chain" id="PRO_0000135771" description="Histidinol dehydrogenase">
    <location>
        <begin position="2"/>
        <end position="434"/>
    </location>
</feature>
<feature type="active site" description="Proton acceptor" evidence="2">
    <location>
        <position position="326"/>
    </location>
</feature>
<feature type="active site" description="Proton acceptor" evidence="2">
    <location>
        <position position="327"/>
    </location>
</feature>
<feature type="binding site" evidence="2">
    <location>
        <position position="130"/>
    </location>
    <ligand>
        <name>NAD(+)</name>
        <dbReference type="ChEBI" id="CHEBI:57540"/>
    </ligand>
</feature>
<feature type="binding site" evidence="2">
    <location>
        <position position="188"/>
    </location>
    <ligand>
        <name>NAD(+)</name>
        <dbReference type="ChEBI" id="CHEBI:57540"/>
    </ligand>
</feature>
<feature type="binding site" evidence="2">
    <location>
        <position position="211"/>
    </location>
    <ligand>
        <name>NAD(+)</name>
        <dbReference type="ChEBI" id="CHEBI:57540"/>
    </ligand>
</feature>
<feature type="binding site" evidence="2">
    <location>
        <position position="237"/>
    </location>
    <ligand>
        <name>substrate</name>
    </ligand>
</feature>
<feature type="binding site" evidence="2">
    <location>
        <position position="259"/>
    </location>
    <ligand>
        <name>substrate</name>
    </ligand>
</feature>
<feature type="binding site" evidence="2">
    <location>
        <position position="259"/>
    </location>
    <ligand>
        <name>Zn(2+)</name>
        <dbReference type="ChEBI" id="CHEBI:29105"/>
    </ligand>
</feature>
<feature type="binding site" evidence="2">
    <location>
        <position position="262"/>
    </location>
    <ligand>
        <name>substrate</name>
    </ligand>
</feature>
<feature type="binding site" evidence="2">
    <location>
        <position position="262"/>
    </location>
    <ligand>
        <name>Zn(2+)</name>
        <dbReference type="ChEBI" id="CHEBI:29105"/>
    </ligand>
</feature>
<feature type="binding site" evidence="2">
    <location>
        <position position="327"/>
    </location>
    <ligand>
        <name>substrate</name>
    </ligand>
</feature>
<feature type="binding site" evidence="2">
    <location>
        <position position="360"/>
    </location>
    <ligand>
        <name>substrate</name>
    </ligand>
</feature>
<feature type="binding site" evidence="2">
    <location>
        <position position="360"/>
    </location>
    <ligand>
        <name>Zn(2+)</name>
        <dbReference type="ChEBI" id="CHEBI:29105"/>
    </ligand>
</feature>
<feature type="binding site" evidence="2">
    <location>
        <position position="414"/>
    </location>
    <ligand>
        <name>substrate</name>
    </ligand>
</feature>
<feature type="binding site" evidence="2">
    <location>
        <position position="419"/>
    </location>
    <ligand>
        <name>substrate</name>
    </ligand>
</feature>
<feature type="binding site" evidence="2">
    <location>
        <position position="419"/>
    </location>
    <ligand>
        <name>Zn(2+)</name>
        <dbReference type="ChEBI" id="CHEBI:29105"/>
    </ligand>
</feature>
<accession>Q8X8T3</accession>
<accession>Q9WX45</accession>
<keyword id="KW-0028">Amino-acid biosynthesis</keyword>
<keyword id="KW-0368">Histidine biosynthesis</keyword>
<keyword id="KW-0479">Metal-binding</keyword>
<keyword id="KW-0520">NAD</keyword>
<keyword id="KW-0560">Oxidoreductase</keyword>
<keyword id="KW-1185">Reference proteome</keyword>
<keyword id="KW-0862">Zinc</keyword>
<name>HISX_ECO57</name>
<protein>
    <recommendedName>
        <fullName evidence="2">Histidinol dehydrogenase</fullName>
        <shortName evidence="2">HDH</shortName>
        <ecNumber evidence="2">1.1.1.23</ecNumber>
    </recommendedName>
</protein>
<dbReference type="EC" id="1.1.1.23" evidence="2"/>
<dbReference type="EMBL" id="AB008676">
    <property type="protein sequence ID" value="BAA77745.1"/>
    <property type="molecule type" value="Genomic_DNA"/>
</dbReference>
<dbReference type="EMBL" id="AE005174">
    <property type="protein sequence ID" value="AAG57079.1"/>
    <property type="molecule type" value="Genomic_DNA"/>
</dbReference>
<dbReference type="EMBL" id="BA000007">
    <property type="protein sequence ID" value="BAB36244.1"/>
    <property type="molecule type" value="Genomic_DNA"/>
</dbReference>
<dbReference type="PIR" id="C85827">
    <property type="entry name" value="C85827"/>
</dbReference>
<dbReference type="PIR" id="E90981">
    <property type="entry name" value="E90981"/>
</dbReference>
<dbReference type="RefSeq" id="NP_310848.1">
    <property type="nucleotide sequence ID" value="NC_002695.1"/>
</dbReference>
<dbReference type="RefSeq" id="WP_001302028.1">
    <property type="nucleotide sequence ID" value="NZ_VOAI01000013.1"/>
</dbReference>
<dbReference type="SMR" id="Q8X8T3"/>
<dbReference type="STRING" id="155864.Z3182"/>
<dbReference type="GeneID" id="912702"/>
<dbReference type="KEGG" id="ece:Z3182"/>
<dbReference type="KEGG" id="ecs:ECs_2821"/>
<dbReference type="PATRIC" id="fig|386585.9.peg.2956"/>
<dbReference type="eggNOG" id="COG0141">
    <property type="taxonomic scope" value="Bacteria"/>
</dbReference>
<dbReference type="HOGENOM" id="CLU_006732_3_0_6"/>
<dbReference type="OMA" id="YIAGPNH"/>
<dbReference type="UniPathway" id="UPA00031">
    <property type="reaction ID" value="UER00014"/>
</dbReference>
<dbReference type="Proteomes" id="UP000000558">
    <property type="component" value="Chromosome"/>
</dbReference>
<dbReference type="Proteomes" id="UP000002519">
    <property type="component" value="Chromosome"/>
</dbReference>
<dbReference type="GO" id="GO:0005829">
    <property type="term" value="C:cytosol"/>
    <property type="evidence" value="ECO:0007669"/>
    <property type="project" value="TreeGrafter"/>
</dbReference>
<dbReference type="GO" id="GO:0004399">
    <property type="term" value="F:histidinol dehydrogenase activity"/>
    <property type="evidence" value="ECO:0007669"/>
    <property type="project" value="UniProtKB-UniRule"/>
</dbReference>
<dbReference type="GO" id="GO:0051287">
    <property type="term" value="F:NAD binding"/>
    <property type="evidence" value="ECO:0007669"/>
    <property type="project" value="InterPro"/>
</dbReference>
<dbReference type="GO" id="GO:0008270">
    <property type="term" value="F:zinc ion binding"/>
    <property type="evidence" value="ECO:0007669"/>
    <property type="project" value="UniProtKB-UniRule"/>
</dbReference>
<dbReference type="GO" id="GO:0000105">
    <property type="term" value="P:L-histidine biosynthetic process"/>
    <property type="evidence" value="ECO:0007669"/>
    <property type="project" value="UniProtKB-UniRule"/>
</dbReference>
<dbReference type="CDD" id="cd06572">
    <property type="entry name" value="Histidinol_dh"/>
    <property type="match status" value="1"/>
</dbReference>
<dbReference type="FunFam" id="1.20.5.1300:FF:000001">
    <property type="entry name" value="Histidine biosynthesis trifunctional protein"/>
    <property type="match status" value="1"/>
</dbReference>
<dbReference type="FunFam" id="3.40.50.1980:FF:000001">
    <property type="entry name" value="Histidinol dehydrogenase"/>
    <property type="match status" value="1"/>
</dbReference>
<dbReference type="Gene3D" id="1.20.5.1300">
    <property type="match status" value="1"/>
</dbReference>
<dbReference type="Gene3D" id="3.40.50.1980">
    <property type="entry name" value="Nitrogenase molybdenum iron protein domain"/>
    <property type="match status" value="2"/>
</dbReference>
<dbReference type="HAMAP" id="MF_01024">
    <property type="entry name" value="HisD"/>
    <property type="match status" value="1"/>
</dbReference>
<dbReference type="InterPro" id="IPR016161">
    <property type="entry name" value="Ald_DH/histidinol_DH"/>
</dbReference>
<dbReference type="InterPro" id="IPR001692">
    <property type="entry name" value="Histidinol_DH_CS"/>
</dbReference>
<dbReference type="InterPro" id="IPR022695">
    <property type="entry name" value="Histidinol_DH_monofunct"/>
</dbReference>
<dbReference type="InterPro" id="IPR012131">
    <property type="entry name" value="Hstdl_DH"/>
</dbReference>
<dbReference type="NCBIfam" id="TIGR00069">
    <property type="entry name" value="hisD"/>
    <property type="match status" value="1"/>
</dbReference>
<dbReference type="PANTHER" id="PTHR21256:SF2">
    <property type="entry name" value="HISTIDINE BIOSYNTHESIS TRIFUNCTIONAL PROTEIN"/>
    <property type="match status" value="1"/>
</dbReference>
<dbReference type="PANTHER" id="PTHR21256">
    <property type="entry name" value="HISTIDINOL DEHYDROGENASE HDH"/>
    <property type="match status" value="1"/>
</dbReference>
<dbReference type="Pfam" id="PF00815">
    <property type="entry name" value="Histidinol_dh"/>
    <property type="match status" value="1"/>
</dbReference>
<dbReference type="PIRSF" id="PIRSF000099">
    <property type="entry name" value="Histidinol_dh"/>
    <property type="match status" value="1"/>
</dbReference>
<dbReference type="PRINTS" id="PR00083">
    <property type="entry name" value="HOLDHDRGNASE"/>
</dbReference>
<dbReference type="SUPFAM" id="SSF53720">
    <property type="entry name" value="ALDH-like"/>
    <property type="match status" value="1"/>
</dbReference>
<dbReference type="PROSITE" id="PS00611">
    <property type="entry name" value="HISOL_DEHYDROGENASE"/>
    <property type="match status" value="1"/>
</dbReference>
<gene>
    <name evidence="2" type="primary">hisD</name>
    <name type="ordered locus">Z3182</name>
    <name type="ordered locus">ECs2821</name>
</gene>
<reference key="1">
    <citation type="journal article" date="1999" name="Microb. Pathog.">
        <title>Analysis of the genes responsible for the O-antigen synthesis in enterohaemorrhagic Escherichia coli O157.</title>
        <authorList>
            <person name="Shimizu T."/>
            <person name="Yamasaki S."/>
            <person name="Tsukamoto T."/>
            <person name="Takeda Y."/>
        </authorList>
    </citation>
    <scope>NUCLEOTIDE SEQUENCE [GENOMIC DNA]</scope>
    <source>
        <strain>O157:H- / 184 / EHEC</strain>
    </source>
</reference>
<reference key="2">
    <citation type="journal article" date="2001" name="Nature">
        <title>Genome sequence of enterohaemorrhagic Escherichia coli O157:H7.</title>
        <authorList>
            <person name="Perna N.T."/>
            <person name="Plunkett G. III"/>
            <person name="Burland V."/>
            <person name="Mau B."/>
            <person name="Glasner J.D."/>
            <person name="Rose D.J."/>
            <person name="Mayhew G.F."/>
            <person name="Evans P.S."/>
            <person name="Gregor J."/>
            <person name="Kirkpatrick H.A."/>
            <person name="Posfai G."/>
            <person name="Hackett J."/>
            <person name="Klink S."/>
            <person name="Boutin A."/>
            <person name="Shao Y."/>
            <person name="Miller L."/>
            <person name="Grotbeck E.J."/>
            <person name="Davis N.W."/>
            <person name="Lim A."/>
            <person name="Dimalanta E.T."/>
            <person name="Potamousis K."/>
            <person name="Apodaca J."/>
            <person name="Anantharaman T.S."/>
            <person name="Lin J."/>
            <person name="Yen G."/>
            <person name="Schwartz D.C."/>
            <person name="Welch R.A."/>
            <person name="Blattner F.R."/>
        </authorList>
    </citation>
    <scope>NUCLEOTIDE SEQUENCE [LARGE SCALE GENOMIC DNA]</scope>
    <source>
        <strain>O157:H7 / EDL933 / ATCC 700927 / EHEC</strain>
    </source>
</reference>
<reference key="3">
    <citation type="journal article" date="2001" name="DNA Res.">
        <title>Complete genome sequence of enterohemorrhagic Escherichia coli O157:H7 and genomic comparison with a laboratory strain K-12.</title>
        <authorList>
            <person name="Hayashi T."/>
            <person name="Makino K."/>
            <person name="Ohnishi M."/>
            <person name="Kurokawa K."/>
            <person name="Ishii K."/>
            <person name="Yokoyama K."/>
            <person name="Han C.-G."/>
            <person name="Ohtsubo E."/>
            <person name="Nakayama K."/>
            <person name="Murata T."/>
            <person name="Tanaka M."/>
            <person name="Tobe T."/>
            <person name="Iida T."/>
            <person name="Takami H."/>
            <person name="Honda T."/>
            <person name="Sasakawa C."/>
            <person name="Ogasawara N."/>
            <person name="Yasunaga T."/>
            <person name="Kuhara S."/>
            <person name="Shiba T."/>
            <person name="Hattori M."/>
            <person name="Shinagawa H."/>
        </authorList>
    </citation>
    <scope>NUCLEOTIDE SEQUENCE [LARGE SCALE GENOMIC DNA]</scope>
    <source>
        <strain>O157:H7 / Sakai / RIMD 0509952 / EHEC</strain>
    </source>
</reference>
<proteinExistence type="inferred from homology"/>
<sequence length="434" mass="46074">MSFNTIIDWNSCTAKQQRQLLMRPAISASESITRTVNDILDSVKARGDDALREYSAKFDKTTVTALKVSAEEIAAASERLSDELKQAMAVAVKNIETFHTAQKLPPVDVETQPGVRCQQVTRPVASVGLYIPGGSAPLFSTVLMLATPARIAGCKKVVLCSPPPIADEILYAAQLCGVQDVFNVGGAQAIAALAFGTESVPKVDKIFGPGNAFVTEAKRQVSQRLDGAAIDMPAGPSEVLVIADSGATPDFVASDLLSQAEHGPDSQVILLTPDADMAHQVAEAVERQLAELPRAETARQALNASRLIVTKDLAQCVEISNQYGPEHLIIQTRNARELVDGITSAGSVFLGDWSPESAGDYASGTNHVLPTYGYTATCSSLGLADFQKRMTVQELSKVGFSALASTIETLAAAERLTAHKNAVTLRVNALKEQA</sequence>
<evidence type="ECO:0000250" key="1"/>
<evidence type="ECO:0000255" key="2">
    <source>
        <dbReference type="HAMAP-Rule" id="MF_01024"/>
    </source>
</evidence>
<organism>
    <name type="scientific">Escherichia coli O157:H7</name>
    <dbReference type="NCBI Taxonomy" id="83334"/>
    <lineage>
        <taxon>Bacteria</taxon>
        <taxon>Pseudomonadati</taxon>
        <taxon>Pseudomonadota</taxon>
        <taxon>Gammaproteobacteria</taxon>
        <taxon>Enterobacterales</taxon>
        <taxon>Enterobacteriaceae</taxon>
        <taxon>Escherichia</taxon>
    </lineage>
</organism>
<comment type="function">
    <text evidence="2">Catalyzes the sequential NAD-dependent oxidations of L-histidinol to L-histidinaldehyde and then to L-histidine.</text>
</comment>
<comment type="catalytic activity">
    <reaction evidence="2">
        <text>L-histidinol + 2 NAD(+) + H2O = L-histidine + 2 NADH + 3 H(+)</text>
        <dbReference type="Rhea" id="RHEA:20641"/>
        <dbReference type="ChEBI" id="CHEBI:15377"/>
        <dbReference type="ChEBI" id="CHEBI:15378"/>
        <dbReference type="ChEBI" id="CHEBI:57540"/>
        <dbReference type="ChEBI" id="CHEBI:57595"/>
        <dbReference type="ChEBI" id="CHEBI:57699"/>
        <dbReference type="ChEBI" id="CHEBI:57945"/>
        <dbReference type="EC" id="1.1.1.23"/>
    </reaction>
</comment>
<comment type="cofactor">
    <cofactor evidence="2">
        <name>Zn(2+)</name>
        <dbReference type="ChEBI" id="CHEBI:29105"/>
    </cofactor>
    <text evidence="2">Binds 1 zinc ion per subunit.</text>
</comment>
<comment type="pathway">
    <text evidence="2">Amino-acid biosynthesis; L-histidine biosynthesis; L-histidine from 5-phospho-alpha-D-ribose 1-diphosphate: step 9/9.</text>
</comment>
<comment type="subunit">
    <text evidence="2">Homodimer.</text>
</comment>
<comment type="similarity">
    <text evidence="2">Belongs to the histidinol dehydrogenase family.</text>
</comment>